<protein>
    <recommendedName>
        <fullName evidence="1">Phosphatidylglycerol--prolipoprotein diacylglyceryl transferase</fullName>
        <ecNumber evidence="1">2.5.1.145</ecNumber>
    </recommendedName>
</protein>
<proteinExistence type="inferred from homology"/>
<reference key="1">
    <citation type="journal article" date="2008" name="Proc. Natl. Acad. Sci. U.S.A.">
        <title>Niche adaptation and genome expansion in the chlorophyll d-producing cyanobacterium Acaryochloris marina.</title>
        <authorList>
            <person name="Swingley W.D."/>
            <person name="Chen M."/>
            <person name="Cheung P.C."/>
            <person name="Conrad A.L."/>
            <person name="Dejesa L.C."/>
            <person name="Hao J."/>
            <person name="Honchak B.M."/>
            <person name="Karbach L.E."/>
            <person name="Kurdoglu A."/>
            <person name="Lahiri S."/>
            <person name="Mastrian S.D."/>
            <person name="Miyashita H."/>
            <person name="Page L."/>
            <person name="Ramakrishna P."/>
            <person name="Satoh S."/>
            <person name="Sattley W.M."/>
            <person name="Shimada Y."/>
            <person name="Taylor H.L."/>
            <person name="Tomo T."/>
            <person name="Tsuchiya T."/>
            <person name="Wang Z.T."/>
            <person name="Raymond J."/>
            <person name="Mimuro M."/>
            <person name="Blankenship R.E."/>
            <person name="Touchman J.W."/>
        </authorList>
    </citation>
    <scope>NUCLEOTIDE SEQUENCE [LARGE SCALE GENOMIC DNA]</scope>
    <source>
        <strain>MBIC 11017</strain>
    </source>
</reference>
<keyword id="KW-0997">Cell inner membrane</keyword>
<keyword id="KW-1003">Cell membrane</keyword>
<keyword id="KW-0472">Membrane</keyword>
<keyword id="KW-1185">Reference proteome</keyword>
<keyword id="KW-0808">Transferase</keyword>
<keyword id="KW-0812">Transmembrane</keyword>
<keyword id="KW-1133">Transmembrane helix</keyword>
<comment type="function">
    <text evidence="1">Catalyzes the transfer of the diacylglyceryl group from phosphatidylglycerol to the sulfhydryl group of the N-terminal cysteine of a prolipoprotein, the first step in the formation of mature lipoproteins.</text>
</comment>
<comment type="catalytic activity">
    <reaction evidence="1">
        <text>L-cysteinyl-[prolipoprotein] + a 1,2-diacyl-sn-glycero-3-phospho-(1'-sn-glycerol) = an S-1,2-diacyl-sn-glyceryl-L-cysteinyl-[prolipoprotein] + sn-glycerol 1-phosphate + H(+)</text>
        <dbReference type="Rhea" id="RHEA:56712"/>
        <dbReference type="Rhea" id="RHEA-COMP:14679"/>
        <dbReference type="Rhea" id="RHEA-COMP:14680"/>
        <dbReference type="ChEBI" id="CHEBI:15378"/>
        <dbReference type="ChEBI" id="CHEBI:29950"/>
        <dbReference type="ChEBI" id="CHEBI:57685"/>
        <dbReference type="ChEBI" id="CHEBI:64716"/>
        <dbReference type="ChEBI" id="CHEBI:140658"/>
        <dbReference type="EC" id="2.5.1.145"/>
    </reaction>
</comment>
<comment type="pathway">
    <text evidence="1">Protein modification; lipoprotein biosynthesis (diacylglyceryl transfer).</text>
</comment>
<comment type="subcellular location">
    <subcellularLocation>
        <location evidence="1">Cell inner membrane</location>
        <topology evidence="1">Multi-pass membrane protein</topology>
    </subcellularLocation>
</comment>
<comment type="similarity">
    <text evidence="1">Belongs to the Lgt family.</text>
</comment>
<accession>B0BZB1</accession>
<dbReference type="EC" id="2.5.1.145" evidence="1"/>
<dbReference type="EMBL" id="CP000828">
    <property type="protein sequence ID" value="ABW29555.1"/>
    <property type="molecule type" value="Genomic_DNA"/>
</dbReference>
<dbReference type="SMR" id="B0BZB1"/>
<dbReference type="STRING" id="329726.AM1_4581"/>
<dbReference type="KEGG" id="amr:AM1_4581"/>
<dbReference type="eggNOG" id="COG0682">
    <property type="taxonomic scope" value="Bacteria"/>
</dbReference>
<dbReference type="HOGENOM" id="CLU_013386_1_2_3"/>
<dbReference type="UniPathway" id="UPA00664"/>
<dbReference type="Proteomes" id="UP000000268">
    <property type="component" value="Chromosome"/>
</dbReference>
<dbReference type="GO" id="GO:0005886">
    <property type="term" value="C:plasma membrane"/>
    <property type="evidence" value="ECO:0007669"/>
    <property type="project" value="UniProtKB-SubCell"/>
</dbReference>
<dbReference type="GO" id="GO:0008961">
    <property type="term" value="F:phosphatidylglycerol-prolipoprotein diacylglyceryl transferase activity"/>
    <property type="evidence" value="ECO:0007669"/>
    <property type="project" value="UniProtKB-UniRule"/>
</dbReference>
<dbReference type="GO" id="GO:0042158">
    <property type="term" value="P:lipoprotein biosynthetic process"/>
    <property type="evidence" value="ECO:0007669"/>
    <property type="project" value="UniProtKB-UniRule"/>
</dbReference>
<dbReference type="HAMAP" id="MF_01147">
    <property type="entry name" value="Lgt"/>
    <property type="match status" value="1"/>
</dbReference>
<dbReference type="InterPro" id="IPR001640">
    <property type="entry name" value="Lgt"/>
</dbReference>
<dbReference type="NCBIfam" id="TIGR00544">
    <property type="entry name" value="lgt"/>
    <property type="match status" value="1"/>
</dbReference>
<dbReference type="PANTHER" id="PTHR30589:SF0">
    <property type="entry name" value="PHOSPHATIDYLGLYCEROL--PROLIPOPROTEIN DIACYLGLYCERYL TRANSFERASE"/>
    <property type="match status" value="1"/>
</dbReference>
<dbReference type="PANTHER" id="PTHR30589">
    <property type="entry name" value="PROLIPOPROTEIN DIACYLGLYCERYL TRANSFERASE"/>
    <property type="match status" value="1"/>
</dbReference>
<dbReference type="Pfam" id="PF01790">
    <property type="entry name" value="LGT"/>
    <property type="match status" value="1"/>
</dbReference>
<dbReference type="PROSITE" id="PS01311">
    <property type="entry name" value="LGT"/>
    <property type="match status" value="1"/>
</dbReference>
<feature type="chain" id="PRO_1000085065" description="Phosphatidylglycerol--prolipoprotein diacylglyceryl transferase">
    <location>
        <begin position="1"/>
        <end position="274"/>
    </location>
</feature>
<feature type="transmembrane region" description="Helical" evidence="1">
    <location>
        <begin position="19"/>
        <end position="39"/>
    </location>
</feature>
<feature type="transmembrane region" description="Helical" evidence="1">
    <location>
        <begin position="59"/>
        <end position="79"/>
    </location>
</feature>
<feature type="transmembrane region" description="Helical" evidence="1">
    <location>
        <begin position="93"/>
        <end position="113"/>
    </location>
</feature>
<feature type="transmembrane region" description="Helical" evidence="1">
    <location>
        <begin position="120"/>
        <end position="140"/>
    </location>
</feature>
<feature type="transmembrane region" description="Helical" evidence="1">
    <location>
        <begin position="181"/>
        <end position="201"/>
    </location>
</feature>
<feature type="transmembrane region" description="Helical" evidence="1">
    <location>
        <begin position="209"/>
        <end position="229"/>
    </location>
</feature>
<feature type="transmembrane region" description="Helical" evidence="1">
    <location>
        <begin position="243"/>
        <end position="263"/>
    </location>
</feature>
<feature type="binding site" evidence="1">
    <location>
        <position position="141"/>
    </location>
    <ligand>
        <name>a 1,2-diacyl-sn-glycero-3-phospho-(1'-sn-glycerol)</name>
        <dbReference type="ChEBI" id="CHEBI:64716"/>
    </ligand>
</feature>
<name>LGT_ACAM1</name>
<organism>
    <name type="scientific">Acaryochloris marina (strain MBIC 11017)</name>
    <dbReference type="NCBI Taxonomy" id="329726"/>
    <lineage>
        <taxon>Bacteria</taxon>
        <taxon>Bacillati</taxon>
        <taxon>Cyanobacteriota</taxon>
        <taxon>Cyanophyceae</taxon>
        <taxon>Acaryochloridales</taxon>
        <taxon>Acaryochloridaceae</taxon>
        <taxon>Acaryochloris</taxon>
    </lineage>
</organism>
<sequence>MLPLYWAVFTSPGPEIFRVGSVVIRWYGVLIAAAIVLGLQLSRHLATYRRIKPDDISDLAIWLVIGAIPCARLYYVLFQWEYYSQHLDQVATIWRGGIAIHGAILGGMLAALIFSRLKKVSFWQLADLVAPSLILGQAIGRWGNFFNSEAFGDPTDLPWKLFIPPARRPLAYRNSAYFHPTFLYESVWNLMVLGILLALFFKFPKAKKGTIFLVYAVTYSLGRLWIEGLRTDSLMLGPLRIAQVVSLIGIGIGMLGLTWLYLLKRSLPDTKQAS</sequence>
<evidence type="ECO:0000255" key="1">
    <source>
        <dbReference type="HAMAP-Rule" id="MF_01147"/>
    </source>
</evidence>
<gene>
    <name evidence="1" type="primary">lgt</name>
    <name type="ordered locus">AM1_4581</name>
</gene>